<reference key="1">
    <citation type="journal article" date="1998" name="Nature">
        <title>The complete genome of the hyperthermophilic bacterium Aquifex aeolicus.</title>
        <authorList>
            <person name="Deckert G."/>
            <person name="Warren P.V."/>
            <person name="Gaasterland T."/>
            <person name="Young W.G."/>
            <person name="Lenox A.L."/>
            <person name="Graham D.E."/>
            <person name="Overbeek R."/>
            <person name="Snead M.A."/>
            <person name="Keller M."/>
            <person name="Aujay M."/>
            <person name="Huber R."/>
            <person name="Feldman R.A."/>
            <person name="Short J.M."/>
            <person name="Olsen G.J."/>
            <person name="Swanson R.V."/>
        </authorList>
    </citation>
    <scope>NUCLEOTIDE SEQUENCE [LARGE SCALE GENOMIC DNA]</scope>
    <source>
        <strain>VF5</strain>
    </source>
</reference>
<gene>
    <name type="ordered locus">aq_1186</name>
</gene>
<name>Y1186_AQUAE</name>
<accession>O67246</accession>
<proteinExistence type="predicted"/>
<protein>
    <recommendedName>
        <fullName>Uncharacterized protein aq_1186</fullName>
    </recommendedName>
</protein>
<sequence length="406" mass="46161">MGSLRVESLLNAFGQSTNINTKSSGDFLAVFLQIFEEIFNAKDGNLFAGKNAKEFAQNFNVNFVPELEKILESNEKLNDTFSNNKVFIEGAKKESFKRLNNPLPEILTFLNQFLKIFQNREVNFIKKTNIQNTRTTTQTTSDSEKGNLNILFTKNLQNLKKALEAFEEIQFNEGNKEKIDKPLKLFSTEEGNVKEFKFFEISKKDKLQISTVNVQEVSLPQDGKGTAHVKQPNKLNNLSELQAVQEKIFKEVSKGETSKTKKSKEFSHSPGVVVELKEWKGKDIPKVQGSEKVFSIKDIRIFEGSERKNVNVKLEGLGIQISFIRDSANLKINLNEMLQNFIFTPYDALKVSQILSSYGFRLESVNVNGSEVYRNREKERVNIKVNELMGEGINSSRSDSNISILL</sequence>
<keyword id="KW-1185">Reference proteome</keyword>
<organism>
    <name type="scientific">Aquifex aeolicus (strain VF5)</name>
    <dbReference type="NCBI Taxonomy" id="224324"/>
    <lineage>
        <taxon>Bacteria</taxon>
        <taxon>Pseudomonadati</taxon>
        <taxon>Aquificota</taxon>
        <taxon>Aquificia</taxon>
        <taxon>Aquificales</taxon>
        <taxon>Aquificaceae</taxon>
        <taxon>Aquifex</taxon>
    </lineage>
</organism>
<feature type="chain" id="PRO_0000186907" description="Uncharacterized protein aq_1186">
    <location>
        <begin position="1"/>
        <end position="406"/>
    </location>
</feature>
<dbReference type="EMBL" id="AE000657">
    <property type="protein sequence ID" value="AAC07205.1"/>
    <property type="molecule type" value="Genomic_DNA"/>
</dbReference>
<dbReference type="PIR" id="C70402">
    <property type="entry name" value="C70402"/>
</dbReference>
<dbReference type="RefSeq" id="NP_213810.1">
    <property type="nucleotide sequence ID" value="NC_000918.1"/>
</dbReference>
<dbReference type="SMR" id="O67246"/>
<dbReference type="STRING" id="224324.aq_1186"/>
<dbReference type="EnsemblBacteria" id="AAC07205">
    <property type="protein sequence ID" value="AAC07205"/>
    <property type="gene ID" value="aq_1186"/>
</dbReference>
<dbReference type="KEGG" id="aae:aq_1186"/>
<dbReference type="HOGENOM" id="CLU_677303_0_0_0"/>
<dbReference type="InParanoid" id="O67246"/>
<dbReference type="Proteomes" id="UP000000798">
    <property type="component" value="Chromosome"/>
</dbReference>